<organism>
    <name type="scientific">Methanococcus maripaludis (strain DSM 14266 / JCM 13030 / NBRC 101832 / S2 / LL)</name>
    <dbReference type="NCBI Taxonomy" id="267377"/>
    <lineage>
        <taxon>Archaea</taxon>
        <taxon>Methanobacteriati</taxon>
        <taxon>Methanobacteriota</taxon>
        <taxon>Methanomada group</taxon>
        <taxon>Methanococci</taxon>
        <taxon>Methanococcales</taxon>
        <taxon>Methanococcaceae</taxon>
        <taxon>Methanococcus</taxon>
    </lineage>
</organism>
<dbReference type="EMBL" id="BX950229">
    <property type="protein sequence ID" value="CAF30970.1"/>
    <property type="molecule type" value="Genomic_DNA"/>
</dbReference>
<dbReference type="RefSeq" id="WP_011171358.1">
    <property type="nucleotide sequence ID" value="NC_005791.1"/>
</dbReference>
<dbReference type="SMR" id="Q6LXD8"/>
<dbReference type="STRING" id="267377.MMP1414"/>
<dbReference type="EnsemblBacteria" id="CAF30970">
    <property type="protein sequence ID" value="CAF30970"/>
    <property type="gene ID" value="MMP1414"/>
</dbReference>
<dbReference type="KEGG" id="mmp:MMP1414"/>
<dbReference type="PATRIC" id="fig|267377.15.peg.1450"/>
<dbReference type="eggNOG" id="arCOG04091">
    <property type="taxonomic scope" value="Archaea"/>
</dbReference>
<dbReference type="HOGENOM" id="CLU_098428_1_1_2"/>
<dbReference type="OrthoDB" id="5670at2157"/>
<dbReference type="Proteomes" id="UP000000590">
    <property type="component" value="Chromosome"/>
</dbReference>
<dbReference type="GO" id="GO:1990904">
    <property type="term" value="C:ribonucleoprotein complex"/>
    <property type="evidence" value="ECO:0007669"/>
    <property type="project" value="UniProtKB-KW"/>
</dbReference>
<dbReference type="GO" id="GO:0005840">
    <property type="term" value="C:ribosome"/>
    <property type="evidence" value="ECO:0007669"/>
    <property type="project" value="UniProtKB-KW"/>
</dbReference>
<dbReference type="GO" id="GO:0019843">
    <property type="term" value="F:rRNA binding"/>
    <property type="evidence" value="ECO:0007669"/>
    <property type="project" value="UniProtKB-UniRule"/>
</dbReference>
<dbReference type="GO" id="GO:0003735">
    <property type="term" value="F:structural constituent of ribosome"/>
    <property type="evidence" value="ECO:0007669"/>
    <property type="project" value="InterPro"/>
</dbReference>
<dbReference type="GO" id="GO:0006412">
    <property type="term" value="P:translation"/>
    <property type="evidence" value="ECO:0007669"/>
    <property type="project" value="UniProtKB-UniRule"/>
</dbReference>
<dbReference type="FunFam" id="3.30.1370.30:FF:000001">
    <property type="entry name" value="40S ribosomal protein S15a"/>
    <property type="match status" value="1"/>
</dbReference>
<dbReference type="Gene3D" id="3.30.1370.30">
    <property type="match status" value="1"/>
</dbReference>
<dbReference type="Gene3D" id="3.30.1490.10">
    <property type="match status" value="1"/>
</dbReference>
<dbReference type="HAMAP" id="MF_01302_A">
    <property type="entry name" value="Ribosomal_uS8_A"/>
    <property type="match status" value="1"/>
</dbReference>
<dbReference type="InterPro" id="IPR000630">
    <property type="entry name" value="Ribosomal_uS8"/>
</dbReference>
<dbReference type="InterPro" id="IPR047863">
    <property type="entry name" value="Ribosomal_uS8_CS"/>
</dbReference>
<dbReference type="InterPro" id="IPR035987">
    <property type="entry name" value="Ribosomal_uS8_sf"/>
</dbReference>
<dbReference type="NCBIfam" id="NF003115">
    <property type="entry name" value="PRK04034.1"/>
    <property type="match status" value="1"/>
</dbReference>
<dbReference type="PANTHER" id="PTHR11758">
    <property type="entry name" value="40S RIBOSOMAL PROTEIN S15A"/>
    <property type="match status" value="1"/>
</dbReference>
<dbReference type="Pfam" id="PF00410">
    <property type="entry name" value="Ribosomal_S8"/>
    <property type="match status" value="1"/>
</dbReference>
<dbReference type="SUPFAM" id="SSF56047">
    <property type="entry name" value="Ribosomal protein S8"/>
    <property type="match status" value="1"/>
</dbReference>
<dbReference type="PROSITE" id="PS00053">
    <property type="entry name" value="RIBOSOMAL_S8"/>
    <property type="match status" value="1"/>
</dbReference>
<keyword id="KW-1185">Reference proteome</keyword>
<keyword id="KW-0687">Ribonucleoprotein</keyword>
<keyword id="KW-0689">Ribosomal protein</keyword>
<keyword id="KW-0694">RNA-binding</keyword>
<keyword id="KW-0699">rRNA-binding</keyword>
<sequence length="130" mass="14324">MSLMDPLANALNHVSNCESVGKNVAYLKPASKLIGRVLNVMQDQGYIGNFEYIEDGKAGVYKVDLIGQINKCGAVKPRYAVKNHDFEKFEKRYLPAKGFGLLIVSTPKGLMTHDEARNAGVGGRLISYIY</sequence>
<gene>
    <name evidence="1" type="primary">rps8</name>
    <name type="ordered locus">MMP1414</name>
</gene>
<name>RS8_METMP</name>
<feature type="chain" id="PRO_0000126435" description="Small ribosomal subunit protein uS8">
    <location>
        <begin position="1"/>
        <end position="130"/>
    </location>
</feature>
<reference key="1">
    <citation type="journal article" date="2004" name="J. Bacteriol.">
        <title>Complete genome sequence of the genetically tractable hydrogenotrophic methanogen Methanococcus maripaludis.</title>
        <authorList>
            <person name="Hendrickson E.L."/>
            <person name="Kaul R."/>
            <person name="Zhou Y."/>
            <person name="Bovee D."/>
            <person name="Chapman P."/>
            <person name="Chung J."/>
            <person name="Conway de Macario E."/>
            <person name="Dodsworth J.A."/>
            <person name="Gillett W."/>
            <person name="Graham D.E."/>
            <person name="Hackett M."/>
            <person name="Haydock A.K."/>
            <person name="Kang A."/>
            <person name="Land M.L."/>
            <person name="Levy R."/>
            <person name="Lie T.J."/>
            <person name="Major T.A."/>
            <person name="Moore B.C."/>
            <person name="Porat I."/>
            <person name="Palmeiri A."/>
            <person name="Rouse G."/>
            <person name="Saenphimmachak C."/>
            <person name="Soell D."/>
            <person name="Van Dien S."/>
            <person name="Wang T."/>
            <person name="Whitman W.B."/>
            <person name="Xia Q."/>
            <person name="Zhang Y."/>
            <person name="Larimer F.W."/>
            <person name="Olson M.V."/>
            <person name="Leigh J.A."/>
        </authorList>
    </citation>
    <scope>NUCLEOTIDE SEQUENCE [LARGE SCALE GENOMIC DNA]</scope>
    <source>
        <strain>DSM 14266 / JCM 13030 / NBRC 101832 / S2 / LL</strain>
    </source>
</reference>
<proteinExistence type="inferred from homology"/>
<evidence type="ECO:0000255" key="1">
    <source>
        <dbReference type="HAMAP-Rule" id="MF_01302"/>
    </source>
</evidence>
<evidence type="ECO:0000305" key="2"/>
<protein>
    <recommendedName>
        <fullName evidence="1">Small ribosomal subunit protein uS8</fullName>
    </recommendedName>
    <alternativeName>
        <fullName evidence="2">30S ribosomal protein S8</fullName>
    </alternativeName>
</protein>
<accession>Q6LXD8</accession>
<comment type="function">
    <text evidence="1">One of the primary rRNA binding proteins, it binds directly to 16S rRNA central domain where it helps coordinate assembly of the platform of the 30S subunit.</text>
</comment>
<comment type="subunit">
    <text evidence="1">Part of the 30S ribosomal subunit.</text>
</comment>
<comment type="similarity">
    <text evidence="1">Belongs to the universal ribosomal protein uS8 family.</text>
</comment>